<comment type="function">
    <text evidence="3 4">Prolyl oligopeptidase; part of the gene cluster that mediates the biosynthesis of omphalotin A, a highly methylated cyclic dodecapeptide with nematodicidal activity (PubMed:28715095, PubMed:33574430). Excises and catalyzes the macrocyclization of the methylated core peptide of OphMA to yield omphalotin A (PubMed:28715095, PubMed:33574430). OphP works in a two-step fashion with an initial cleavage at the N-terminus, followed by a second cleavage at the C-terminus of the core peptide (PubMed:33574430). According to this mechanism, the free N-terminus of the core peptide, generated by the first cleavage, attacks the covalent intermediate of the second cleavage, which results in macrocyclization of the core peptide (PubMed:33574430).</text>
</comment>
<comment type="catalytic activity">
    <reaction evidence="3 4">
        <text>Hydrolysis of Pro-|-Xaa &gt;&gt; Ala-|-Xaa in oligopeptides.</text>
        <dbReference type="EC" id="3.4.21.26"/>
    </reaction>
</comment>
<comment type="pathway">
    <text evidence="3 4">Mycotoxin biosynthesis.</text>
</comment>
<comment type="subunit">
    <text evidence="1">Monomer.</text>
</comment>
<comment type="biotechnology">
    <text evidence="4">Omphalotins display strong and selective activity against the plant-pathogenic nematode Meloidogyne incognita but shows no further phytotoxic, antibacterial, or antifungal activities.</text>
</comment>
<comment type="similarity">
    <text evidence="6">Belongs to the peptidase S9A family.</text>
</comment>
<accession>P9WEN5</accession>
<gene>
    <name evidence="5" type="primary">ophP</name>
</gene>
<feature type="chain" id="PRO_0000458535" description="Prolyl oligopeptidase ophP">
    <location>
        <begin position="1"/>
        <end position="745"/>
    </location>
</feature>
<feature type="active site" description="Charge relay system" evidence="2">
    <location>
        <position position="580"/>
    </location>
</feature>
<feature type="active site" description="Charge relay system" evidence="2">
    <location>
        <position position="665"/>
    </location>
</feature>
<feature type="active site" description="Charge relay system" evidence="2">
    <location>
        <position position="701"/>
    </location>
</feature>
<protein>
    <recommendedName>
        <fullName evidence="5">Prolyl oligopeptidase ophP</fullName>
        <ecNumber evidence="3 4">3.4.21.26</ecNumber>
    </recommendedName>
    <alternativeName>
        <fullName evidence="5">Omphalotin A biosynthesis cluster protein P</fullName>
    </alternativeName>
</protein>
<proteinExistence type="evidence at protein level"/>
<organism>
    <name type="scientific">Omphalotus olearius</name>
    <name type="common">Jack o'lantern</name>
    <dbReference type="NCBI Taxonomy" id="72120"/>
    <lineage>
        <taxon>Eukaryota</taxon>
        <taxon>Fungi</taxon>
        <taxon>Dikarya</taxon>
        <taxon>Basidiomycota</taxon>
        <taxon>Agaricomycotina</taxon>
        <taxon>Agaricomycetes</taxon>
        <taxon>Agaricomycetidae</taxon>
        <taxon>Agaricales</taxon>
        <taxon>Marasmiineae</taxon>
        <taxon>Omphalotaceae</taxon>
        <taxon>Omphalotus</taxon>
    </lineage>
</organism>
<reference key="1">
    <citation type="journal article" date="2017" name="Angew. Chem. Int. Ed.">
        <title>A Self-sacrificing N-methyltransferase is the precursor of the fungal natural product omphalotin.</title>
        <authorList>
            <person name="Ramm S."/>
            <person name="Krawczyk B."/>
            <person name="Muehlenweg A."/>
            <person name="Poch A."/>
            <person name="Moesker E."/>
            <person name="Suessmuth R.D."/>
        </authorList>
    </citation>
    <scope>NUCLEOTIDE SEQUENCE [GENOMIC DNA]</scope>
    <scope>FUNCTION</scope>
    <scope>CATALYTIC ACTIVITY</scope>
    <scope>PATHWAY</scope>
</reference>
<reference key="2">
    <citation type="journal article" date="2021" name="Sci. Rep.">
        <title>Identification, heterologous production and bioactivity of lentinulin A and dendrothelin A, two natural variants of backbone N-methylated peptide macrocycle omphalotin A.</title>
        <authorList>
            <person name="Matabaro E."/>
            <person name="Kaspar H."/>
            <person name="Dahlin P."/>
            <person name="Bader D.L.V."/>
            <person name="Murar C.E."/>
            <person name="Staubli F."/>
            <person name="Field C.M."/>
            <person name="Bode J.W."/>
            <person name="Kuenzler M."/>
        </authorList>
    </citation>
    <scope>FUNCTION</scope>
    <scope>CATALYTIC ACTIVITY</scope>
    <scope>PATHWAY</scope>
    <scope>BIOTECHNOLOGY</scope>
</reference>
<reference key="3">
    <citation type="journal article" date="2022" name="Sci. Rep.">
        <title>Author Correction: Identification, heterologous production and bioactivity of lentinulin A and dendrothelin A, two natural variants of backbone N-methylated peptide macrocycle omphalotin A.</title>
        <authorList>
            <person name="Matabaro E."/>
            <person name="Kaspar H."/>
            <person name="Dahlin P."/>
            <person name="Bader D.L.V."/>
            <person name="Murar C.E."/>
            <person name="Staubli F."/>
            <person name="Field C.M."/>
            <person name="Bode J.W."/>
            <person name="Kuenzler M."/>
        </authorList>
    </citation>
    <scope>ERRATUM OF PUBMED:33574430</scope>
</reference>
<evidence type="ECO:0000250" key="1">
    <source>
        <dbReference type="UniProtKB" id="P48147"/>
    </source>
</evidence>
<evidence type="ECO:0000255" key="2">
    <source>
        <dbReference type="PROSITE-ProRule" id="PRU10084"/>
    </source>
</evidence>
<evidence type="ECO:0000269" key="3">
    <source>
    </source>
</evidence>
<evidence type="ECO:0000269" key="4">
    <source>
    </source>
</evidence>
<evidence type="ECO:0000303" key="5">
    <source>
    </source>
</evidence>
<evidence type="ECO:0000305" key="6"/>
<keyword id="KW-0378">Hydrolase</keyword>
<keyword id="KW-0645">Protease</keyword>
<keyword id="KW-0720">Serine protease</keyword>
<keyword id="KW-0843">Virulence</keyword>
<name>OPHP_OMPOL</name>
<dbReference type="EC" id="3.4.21.26" evidence="3 4"/>
<dbReference type="SMR" id="P9WEN5"/>
<dbReference type="ESTHER" id="ompol-OphP">
    <property type="family name" value="S9N_PPCE_Peptidase_S9"/>
</dbReference>
<dbReference type="GO" id="GO:0005829">
    <property type="term" value="C:cytosol"/>
    <property type="evidence" value="ECO:0007669"/>
    <property type="project" value="TreeGrafter"/>
</dbReference>
<dbReference type="GO" id="GO:0070012">
    <property type="term" value="F:oligopeptidase activity"/>
    <property type="evidence" value="ECO:0007669"/>
    <property type="project" value="TreeGrafter"/>
</dbReference>
<dbReference type="GO" id="GO:0004252">
    <property type="term" value="F:serine-type endopeptidase activity"/>
    <property type="evidence" value="ECO:0007669"/>
    <property type="project" value="InterPro"/>
</dbReference>
<dbReference type="GO" id="GO:0006508">
    <property type="term" value="P:proteolysis"/>
    <property type="evidence" value="ECO:0007669"/>
    <property type="project" value="UniProtKB-KW"/>
</dbReference>
<dbReference type="FunFam" id="3.40.50.1820:FF:000005">
    <property type="entry name" value="Prolyl endopeptidase"/>
    <property type="match status" value="1"/>
</dbReference>
<dbReference type="Gene3D" id="3.40.50.1820">
    <property type="entry name" value="alpha/beta hydrolase"/>
    <property type="match status" value="1"/>
</dbReference>
<dbReference type="Gene3D" id="2.130.10.120">
    <property type="entry name" value="Prolyl oligopeptidase, N-terminal domain"/>
    <property type="match status" value="1"/>
</dbReference>
<dbReference type="InterPro" id="IPR029058">
    <property type="entry name" value="AB_hydrolase_fold"/>
</dbReference>
<dbReference type="InterPro" id="IPR002471">
    <property type="entry name" value="Pept_S9_AS"/>
</dbReference>
<dbReference type="InterPro" id="IPR023302">
    <property type="entry name" value="Pept_S9A_N"/>
</dbReference>
<dbReference type="InterPro" id="IPR001375">
    <property type="entry name" value="Peptidase_S9_cat"/>
</dbReference>
<dbReference type="InterPro" id="IPR002470">
    <property type="entry name" value="Peptidase_S9A"/>
</dbReference>
<dbReference type="InterPro" id="IPR051167">
    <property type="entry name" value="Prolyl_oligopep/macrocyclase"/>
</dbReference>
<dbReference type="PANTHER" id="PTHR42881">
    <property type="entry name" value="PROLYL ENDOPEPTIDASE"/>
    <property type="match status" value="1"/>
</dbReference>
<dbReference type="PANTHER" id="PTHR42881:SF2">
    <property type="entry name" value="PROLYL ENDOPEPTIDASE"/>
    <property type="match status" value="1"/>
</dbReference>
<dbReference type="Pfam" id="PF00326">
    <property type="entry name" value="Peptidase_S9"/>
    <property type="match status" value="1"/>
</dbReference>
<dbReference type="Pfam" id="PF02897">
    <property type="entry name" value="Peptidase_S9_N"/>
    <property type="match status" value="1"/>
</dbReference>
<dbReference type="PRINTS" id="PR00862">
    <property type="entry name" value="PROLIGOPTASE"/>
</dbReference>
<dbReference type="SUPFAM" id="SSF53474">
    <property type="entry name" value="alpha/beta-Hydrolases"/>
    <property type="match status" value="1"/>
</dbReference>
<dbReference type="SUPFAM" id="SSF50993">
    <property type="entry name" value="Peptidase/esterase 'gauge' domain"/>
    <property type="match status" value="1"/>
</dbReference>
<dbReference type="PROSITE" id="PS00708">
    <property type="entry name" value="PRO_ENDOPEP_SER"/>
    <property type="match status" value="1"/>
</dbReference>
<sequence length="745" mass="84285">MSFPGWGPYPPVERDETSAITYSSKLHGSVTVRDPYSQLEVPFEDSEETKAFVHSQRKFARTYLDENPDREAWLETLKKSWNYRRFSALKPESDGHYYFEYNDGLQSQLSLYRVRMGEEDTVLTESGPGGELFFNPNLLSLDGNAALTGFVMSPCGNYWAYGVSEHGSDWMSIYVRKTSSPHLPSQERGKDPGRMNDKIRHVRFFIVSWTSDSKGFFYSRYPPEDDEGKGNAPAMNCMVYYHRIGEDQESDVLVHEDPEHPFWISSVQLTPSGRYILFAASRDASHTQLVKIADLHENDIGTNMKWKNLHDPWEARFTIVGDEGSKIYFMTNLKAKNYKVATFDANHPDEGLTTLIAEDPNAFLVSASIHAQDKLLLVYLRNASHEIHIRDLTTGKPLGRIFEDLLGQFMVSGRRQDNDIFVLFSSFLSPGTVYRYTFGEEKGHSSLFRAISIPGLNLDDFMTESVFYPSKDGTSVHMFITRPKDVLLDGTSPVLQYGYGGFSLAMLPTFSLSTLLFCKIYRAIYAIPNIRGGSEYGESWHREGMLDKKQNVFDDFNAATEWLIANKYASKDRIAIRGGSNGGVLTTACANQAPGLYRCVITIEGIIDMLRFPKFTFGASWRSEYGDPEDPEDFDFIFKYSPYHNIPPPGDTIMPAMLFFTAAYDDRVSPLHTFKHVAALQHNFPKGPNPCLMRIDLNSGHFAGKSTQEMLEETADEYSFIGKSMGLTMQTQGSVDSSRWSCVTV</sequence>